<evidence type="ECO:0000250" key="1">
    <source>
        <dbReference type="UniProtKB" id="Q5XI06"/>
    </source>
</evidence>
<evidence type="ECO:0000250" key="2">
    <source>
        <dbReference type="UniProtKB" id="Q9H7Z6"/>
    </source>
</evidence>
<evidence type="ECO:0000255" key="3"/>
<evidence type="ECO:0000255" key="4">
    <source>
        <dbReference type="PROSITE-ProRule" id="PRU01063"/>
    </source>
</evidence>
<evidence type="ECO:0000256" key="5">
    <source>
        <dbReference type="SAM" id="MobiDB-lite"/>
    </source>
</evidence>
<evidence type="ECO:0000269" key="6">
    <source>
    </source>
</evidence>
<evidence type="ECO:0000269" key="7">
    <source>
    </source>
</evidence>
<evidence type="ECO:0000269" key="8">
    <source>
    </source>
</evidence>
<evidence type="ECO:0000269" key="9">
    <source>
    </source>
</evidence>
<evidence type="ECO:0000269" key="10">
    <source>
    </source>
</evidence>
<evidence type="ECO:0000269" key="11">
    <source>
    </source>
</evidence>
<evidence type="ECO:0000269" key="12">
    <source>
    </source>
</evidence>
<evidence type="ECO:0000269" key="13">
    <source>
    </source>
</evidence>
<evidence type="ECO:0000269" key="14">
    <source>
    </source>
</evidence>
<evidence type="ECO:0000269" key="15">
    <source>
    </source>
</evidence>
<evidence type="ECO:0000269" key="16">
    <source>
    </source>
</evidence>
<evidence type="ECO:0000269" key="17">
    <source>
    </source>
</evidence>
<evidence type="ECO:0000269" key="18">
    <source>
    </source>
</evidence>
<evidence type="ECO:0000269" key="19">
    <source>
    </source>
</evidence>
<evidence type="ECO:0000269" key="20">
    <source>
    </source>
</evidence>
<evidence type="ECO:0000269" key="21">
    <source>
    </source>
</evidence>
<evidence type="ECO:0000269" key="22">
    <source>
    </source>
</evidence>
<evidence type="ECO:0000303" key="23">
    <source>
    </source>
</evidence>
<evidence type="ECO:0000303" key="24">
    <source>
    </source>
</evidence>
<evidence type="ECO:0000303" key="25">
    <source>
    </source>
</evidence>
<evidence type="ECO:0000303" key="26">
    <source>
    </source>
</evidence>
<evidence type="ECO:0000303" key="27">
    <source>
    </source>
</evidence>
<evidence type="ECO:0000305" key="28"/>
<evidence type="ECO:0000305" key="29">
    <source>
    </source>
</evidence>
<evidence type="ECO:0000305" key="30">
    <source>
    </source>
</evidence>
<evidence type="ECO:0000312" key="31">
    <source>
        <dbReference type="MGI" id="MGI:1915023"/>
    </source>
</evidence>
<evidence type="ECO:0007829" key="32">
    <source>
        <dbReference type="PDB" id="1WGS"/>
    </source>
</evidence>
<feature type="initiator methionine" description="Removed" evidence="2">
    <location>
        <position position="1"/>
    </location>
</feature>
<feature type="chain" id="PRO_0000051567" description="Histone acetyltransferase KAT8">
    <location>
        <begin position="2"/>
        <end position="458"/>
    </location>
</feature>
<feature type="domain" description="Tudor-knot" evidence="3">
    <location>
        <begin position="55"/>
        <end position="110"/>
    </location>
</feature>
<feature type="domain" description="MYST-type HAT" evidence="4">
    <location>
        <begin position="174"/>
        <end position="447"/>
    </location>
</feature>
<feature type="zinc finger region" description="C2HC MYST-type" evidence="4">
    <location>
        <begin position="207"/>
        <end position="232"/>
    </location>
</feature>
<feature type="region of interest" description="Disordered" evidence="5">
    <location>
        <begin position="1"/>
        <end position="52"/>
    </location>
</feature>
<feature type="region of interest" description="Sufficient for interaction with KANSL1" evidence="2">
    <location>
        <begin position="174"/>
        <end position="458"/>
    </location>
</feature>
<feature type="short sequence motif" description="Nuclear localization signal" evidence="2">
    <location>
        <begin position="140"/>
        <end position="149"/>
    </location>
</feature>
<feature type="compositionally biased region" description="Low complexity" evidence="5">
    <location>
        <begin position="1"/>
        <end position="17"/>
    </location>
</feature>
<feature type="compositionally biased region" description="Low complexity" evidence="5">
    <location>
        <begin position="25"/>
        <end position="35"/>
    </location>
</feature>
<feature type="active site" description="Proton donor/acceptor" evidence="29">
    <location>
        <position position="350"/>
    </location>
</feature>
<feature type="binding site" evidence="2">
    <location>
        <position position="210"/>
    </location>
    <ligand>
        <name>Zn(2+)</name>
        <dbReference type="ChEBI" id="CHEBI:29105"/>
    </ligand>
</feature>
<feature type="binding site" evidence="2">
    <location>
        <position position="213"/>
    </location>
    <ligand>
        <name>Zn(2+)</name>
        <dbReference type="ChEBI" id="CHEBI:29105"/>
    </ligand>
</feature>
<feature type="binding site" evidence="2">
    <location>
        <position position="226"/>
    </location>
    <ligand>
        <name>Zn(2+)</name>
        <dbReference type="ChEBI" id="CHEBI:29105"/>
    </ligand>
</feature>
<feature type="binding site" evidence="2">
    <location>
        <position position="230"/>
    </location>
    <ligand>
        <name>Zn(2+)</name>
        <dbReference type="ChEBI" id="CHEBI:29105"/>
    </ligand>
</feature>
<feature type="binding site" evidence="2">
    <location>
        <position position="317"/>
    </location>
    <ligand>
        <name>acetyl-CoA</name>
        <dbReference type="ChEBI" id="CHEBI:57288"/>
    </ligand>
</feature>
<feature type="binding site" evidence="2">
    <location>
        <position position="319"/>
    </location>
    <ligand>
        <name>acetyl-CoA</name>
        <dbReference type="ChEBI" id="CHEBI:57288"/>
    </ligand>
</feature>
<feature type="binding site" evidence="2">
    <location>
        <position position="325"/>
    </location>
    <ligand>
        <name>acetyl-CoA</name>
        <dbReference type="ChEBI" id="CHEBI:57288"/>
    </ligand>
</feature>
<feature type="binding site" evidence="2">
    <location>
        <position position="326"/>
    </location>
    <ligand>
        <name>acetyl-CoA</name>
        <dbReference type="ChEBI" id="CHEBI:57288"/>
    </ligand>
</feature>
<feature type="binding site" evidence="2">
    <location>
        <position position="327"/>
    </location>
    <ligand>
        <name>acetyl-CoA</name>
        <dbReference type="ChEBI" id="CHEBI:57288"/>
    </ligand>
</feature>
<feature type="binding site" evidence="2">
    <location>
        <position position="329"/>
    </location>
    <ligand>
        <name>acetyl-CoA</name>
        <dbReference type="ChEBI" id="CHEBI:57288"/>
    </ligand>
</feature>
<feature type="binding site" evidence="2">
    <location>
        <position position="330"/>
    </location>
    <ligand>
        <name>acetyl-CoA</name>
        <dbReference type="ChEBI" id="CHEBI:57288"/>
    </ligand>
</feature>
<feature type="binding site" evidence="2">
    <location>
        <position position="354"/>
    </location>
    <ligand>
        <name>acetyl-CoA</name>
        <dbReference type="ChEBI" id="CHEBI:57288"/>
    </ligand>
</feature>
<feature type="binding site" evidence="2">
    <location>
        <position position="363"/>
    </location>
    <ligand>
        <name>acetyl-CoA</name>
        <dbReference type="ChEBI" id="CHEBI:57288"/>
    </ligand>
</feature>
<feature type="binding site" evidence="2">
    <location>
        <position position="408"/>
    </location>
    <ligand>
        <name>acetyl-CoA</name>
        <dbReference type="ChEBI" id="CHEBI:57288"/>
    </ligand>
</feature>
<feature type="binding site" evidence="2">
    <location>
        <position position="432"/>
    </location>
    <ligand>
        <name>acetyl-CoA</name>
        <dbReference type="ChEBI" id="CHEBI:57288"/>
    </ligand>
</feature>
<feature type="modified residue" description="N-acetylalanine" evidence="2">
    <location>
        <position position="2"/>
    </location>
</feature>
<feature type="modified residue" description="Phosphoserine" evidence="1">
    <location>
        <position position="37"/>
    </location>
</feature>
<feature type="modified residue" description="Phosphoserine" evidence="1">
    <location>
        <position position="42"/>
    </location>
</feature>
<feature type="modified residue" description="N6-acetyllysine" evidence="2">
    <location>
        <position position="113"/>
    </location>
</feature>
<feature type="modified residue" description="N6-acetyllysine" evidence="16">
    <location>
        <position position="274"/>
    </location>
</feature>
<feature type="modified residue" description="Phosphoserine" evidence="2">
    <location>
        <position position="348"/>
    </location>
</feature>
<feature type="splice variant" id="VSP_014580" description="In isoform 2." evidence="23">
    <original>TYAEMDPTTAALEKEHEAITKVKYVDKIHIGNYEIDAWYF</original>
    <variation>VLAPPFSGPSQQSHSNSHVKAGSMPGFFSRLFTYEKILSL</variation>
    <location>
        <begin position="155"/>
        <end position="194"/>
    </location>
</feature>
<feature type="splice variant" id="VSP_014581" description="In isoform 2." evidence="23">
    <location>
        <begin position="195"/>
        <end position="458"/>
    </location>
</feature>
<feature type="mutagenesis site" description="Abolished ability to acetylate proteins." evidence="16">
    <original>K</original>
    <variation>R</variation>
    <location>
        <position position="274"/>
    </location>
</feature>
<feature type="mutagenesis site" description="Abolished protein acetyltransferase activity." evidence="17">
    <original>E</original>
    <variation>Q</variation>
    <location>
        <position position="350"/>
    </location>
</feature>
<feature type="sequence conflict" description="In Ref. 2; AAH36284." evidence="28" ref="2">
    <original>L</original>
    <variation>F</variation>
    <location>
        <position position="385"/>
    </location>
</feature>
<feature type="strand" evidence="32">
    <location>
        <begin position="59"/>
        <end position="65"/>
    </location>
</feature>
<feature type="turn" evidence="32">
    <location>
        <begin position="66"/>
        <end position="68"/>
    </location>
</feature>
<feature type="strand" evidence="32">
    <location>
        <begin position="69"/>
        <end position="81"/>
    </location>
</feature>
<feature type="turn" evidence="32">
    <location>
        <begin position="82"/>
        <end position="85"/>
    </location>
</feature>
<feature type="strand" evidence="32">
    <location>
        <begin position="86"/>
        <end position="92"/>
    </location>
</feature>
<feature type="turn" evidence="32">
    <location>
        <begin position="94"/>
        <end position="96"/>
    </location>
</feature>
<feature type="strand" evidence="32">
    <location>
        <begin position="102"/>
        <end position="104"/>
    </location>
</feature>
<feature type="turn" evidence="32">
    <location>
        <begin position="106"/>
        <end position="108"/>
    </location>
</feature>
<feature type="turn" evidence="32">
    <location>
        <begin position="112"/>
        <end position="114"/>
    </location>
</feature>
<feature type="strand" evidence="32">
    <location>
        <begin position="115"/>
        <end position="117"/>
    </location>
</feature>
<proteinExistence type="evidence at protein level"/>
<reference key="1">
    <citation type="journal article" date="2005" name="Science">
        <title>The transcriptional landscape of the mammalian genome.</title>
        <authorList>
            <person name="Carninci P."/>
            <person name="Kasukawa T."/>
            <person name="Katayama S."/>
            <person name="Gough J."/>
            <person name="Frith M.C."/>
            <person name="Maeda N."/>
            <person name="Oyama R."/>
            <person name="Ravasi T."/>
            <person name="Lenhard B."/>
            <person name="Wells C."/>
            <person name="Kodzius R."/>
            <person name="Shimokawa K."/>
            <person name="Bajic V.B."/>
            <person name="Brenner S.E."/>
            <person name="Batalov S."/>
            <person name="Forrest A.R."/>
            <person name="Zavolan M."/>
            <person name="Davis M.J."/>
            <person name="Wilming L.G."/>
            <person name="Aidinis V."/>
            <person name="Allen J.E."/>
            <person name="Ambesi-Impiombato A."/>
            <person name="Apweiler R."/>
            <person name="Aturaliya R.N."/>
            <person name="Bailey T.L."/>
            <person name="Bansal M."/>
            <person name="Baxter L."/>
            <person name="Beisel K.W."/>
            <person name="Bersano T."/>
            <person name="Bono H."/>
            <person name="Chalk A.M."/>
            <person name="Chiu K.P."/>
            <person name="Choudhary V."/>
            <person name="Christoffels A."/>
            <person name="Clutterbuck D.R."/>
            <person name="Crowe M.L."/>
            <person name="Dalla E."/>
            <person name="Dalrymple B.P."/>
            <person name="de Bono B."/>
            <person name="Della Gatta G."/>
            <person name="di Bernardo D."/>
            <person name="Down T."/>
            <person name="Engstrom P."/>
            <person name="Fagiolini M."/>
            <person name="Faulkner G."/>
            <person name="Fletcher C.F."/>
            <person name="Fukushima T."/>
            <person name="Furuno M."/>
            <person name="Futaki S."/>
            <person name="Gariboldi M."/>
            <person name="Georgii-Hemming P."/>
            <person name="Gingeras T.R."/>
            <person name="Gojobori T."/>
            <person name="Green R.E."/>
            <person name="Gustincich S."/>
            <person name="Harbers M."/>
            <person name="Hayashi Y."/>
            <person name="Hensch T.K."/>
            <person name="Hirokawa N."/>
            <person name="Hill D."/>
            <person name="Huminiecki L."/>
            <person name="Iacono M."/>
            <person name="Ikeo K."/>
            <person name="Iwama A."/>
            <person name="Ishikawa T."/>
            <person name="Jakt M."/>
            <person name="Kanapin A."/>
            <person name="Katoh M."/>
            <person name="Kawasawa Y."/>
            <person name="Kelso J."/>
            <person name="Kitamura H."/>
            <person name="Kitano H."/>
            <person name="Kollias G."/>
            <person name="Krishnan S.P."/>
            <person name="Kruger A."/>
            <person name="Kummerfeld S.K."/>
            <person name="Kurochkin I.V."/>
            <person name="Lareau L.F."/>
            <person name="Lazarevic D."/>
            <person name="Lipovich L."/>
            <person name="Liu J."/>
            <person name="Liuni S."/>
            <person name="McWilliam S."/>
            <person name="Madan Babu M."/>
            <person name="Madera M."/>
            <person name="Marchionni L."/>
            <person name="Matsuda H."/>
            <person name="Matsuzawa S."/>
            <person name="Miki H."/>
            <person name="Mignone F."/>
            <person name="Miyake S."/>
            <person name="Morris K."/>
            <person name="Mottagui-Tabar S."/>
            <person name="Mulder N."/>
            <person name="Nakano N."/>
            <person name="Nakauchi H."/>
            <person name="Ng P."/>
            <person name="Nilsson R."/>
            <person name="Nishiguchi S."/>
            <person name="Nishikawa S."/>
            <person name="Nori F."/>
            <person name="Ohara O."/>
            <person name="Okazaki Y."/>
            <person name="Orlando V."/>
            <person name="Pang K.C."/>
            <person name="Pavan W.J."/>
            <person name="Pavesi G."/>
            <person name="Pesole G."/>
            <person name="Petrovsky N."/>
            <person name="Piazza S."/>
            <person name="Reed J."/>
            <person name="Reid J.F."/>
            <person name="Ring B.Z."/>
            <person name="Ringwald M."/>
            <person name="Rost B."/>
            <person name="Ruan Y."/>
            <person name="Salzberg S.L."/>
            <person name="Sandelin A."/>
            <person name="Schneider C."/>
            <person name="Schoenbach C."/>
            <person name="Sekiguchi K."/>
            <person name="Semple C.A."/>
            <person name="Seno S."/>
            <person name="Sessa L."/>
            <person name="Sheng Y."/>
            <person name="Shibata Y."/>
            <person name="Shimada H."/>
            <person name="Shimada K."/>
            <person name="Silva D."/>
            <person name="Sinclair B."/>
            <person name="Sperling S."/>
            <person name="Stupka E."/>
            <person name="Sugiura K."/>
            <person name="Sultana R."/>
            <person name="Takenaka Y."/>
            <person name="Taki K."/>
            <person name="Tammoja K."/>
            <person name="Tan S.L."/>
            <person name="Tang S."/>
            <person name="Taylor M.S."/>
            <person name="Tegner J."/>
            <person name="Teichmann S.A."/>
            <person name="Ueda H.R."/>
            <person name="van Nimwegen E."/>
            <person name="Verardo R."/>
            <person name="Wei C.L."/>
            <person name="Yagi K."/>
            <person name="Yamanishi H."/>
            <person name="Zabarovsky E."/>
            <person name="Zhu S."/>
            <person name="Zimmer A."/>
            <person name="Hide W."/>
            <person name="Bult C."/>
            <person name="Grimmond S.M."/>
            <person name="Teasdale R.D."/>
            <person name="Liu E.T."/>
            <person name="Brusic V."/>
            <person name="Quackenbush J."/>
            <person name="Wahlestedt C."/>
            <person name="Mattick J.S."/>
            <person name="Hume D.A."/>
            <person name="Kai C."/>
            <person name="Sasaki D."/>
            <person name="Tomaru Y."/>
            <person name="Fukuda S."/>
            <person name="Kanamori-Katayama M."/>
            <person name="Suzuki M."/>
            <person name="Aoki J."/>
            <person name="Arakawa T."/>
            <person name="Iida J."/>
            <person name="Imamura K."/>
            <person name="Itoh M."/>
            <person name="Kato T."/>
            <person name="Kawaji H."/>
            <person name="Kawagashira N."/>
            <person name="Kawashima T."/>
            <person name="Kojima M."/>
            <person name="Kondo S."/>
            <person name="Konno H."/>
            <person name="Nakano K."/>
            <person name="Ninomiya N."/>
            <person name="Nishio T."/>
            <person name="Okada M."/>
            <person name="Plessy C."/>
            <person name="Shibata K."/>
            <person name="Shiraki T."/>
            <person name="Suzuki S."/>
            <person name="Tagami M."/>
            <person name="Waki K."/>
            <person name="Watahiki A."/>
            <person name="Okamura-Oho Y."/>
            <person name="Suzuki H."/>
            <person name="Kawai J."/>
            <person name="Hayashizaki Y."/>
        </authorList>
    </citation>
    <scope>NUCLEOTIDE SEQUENCE [LARGE SCALE MRNA] (ISOFORMS 1 AND 2)</scope>
    <source>
        <strain>C57BL/6J</strain>
        <tissue>Amnion</tissue>
        <tissue>Embryo</tissue>
        <tissue>Head</tissue>
        <tissue>Thymus</tissue>
    </source>
</reference>
<reference key="2">
    <citation type="journal article" date="2004" name="Genome Res.">
        <title>The status, quality, and expansion of the NIH full-length cDNA project: the Mammalian Gene Collection (MGC).</title>
        <authorList>
            <consortium name="The MGC Project Team"/>
        </authorList>
    </citation>
    <scope>NUCLEOTIDE SEQUENCE [LARGE SCALE MRNA] (ISOFORM 1)</scope>
    <source>
        <strain>FVB/N</strain>
        <tissue>Liver</tissue>
    </source>
</reference>
<reference key="3">
    <citation type="journal article" date="2007" name="Biochem. Biophys. Res. Commun.">
        <title>Characterization of hampin/MSL1 as a node in the nuclear interactome.</title>
        <authorList>
            <person name="Dmitriev R.I."/>
            <person name="Korneenko T.V."/>
            <person name="Bessonov A.A."/>
            <person name="Shakhparonov M.I."/>
            <person name="Modyanov N.N."/>
            <person name="Pestov N.B."/>
        </authorList>
    </citation>
    <scope>INTERACTION WITH MSL1 AND NELFD</scope>
</reference>
<reference key="4">
    <citation type="journal article" date="2008" name="Mol. Cell. Biol.">
        <title>The mammalian ortholog of Drosophila MOF that acetylates histone H4 lysine 16 is essential for embryogenesis and oncogenesis.</title>
        <authorList>
            <person name="Gupta A."/>
            <person name="Guerin-Peyrou T.G."/>
            <person name="Sharma G.G."/>
            <person name="Park C."/>
            <person name="Agarwal M."/>
            <person name="Ganju R.K."/>
            <person name="Pandita S."/>
            <person name="Choi K."/>
            <person name="Sukumar S."/>
            <person name="Pandita R.K."/>
            <person name="Ludwig T."/>
            <person name="Pandita T.K."/>
        </authorList>
    </citation>
    <scope>FUNCTION</scope>
    <scope>DISRUPTION PHENOTYPE</scope>
</reference>
<reference key="5">
    <citation type="journal article" date="2008" name="Mol. Cell. Biol.">
        <title>Mof (MYST1 or KAT8) is essential for progression of embryonic development past the blastocyst stage and required for normal chromatin architecture.</title>
        <authorList>
            <person name="Thomas T."/>
            <person name="Dixon M.P."/>
            <person name="Kueh A.J."/>
            <person name="Voss A.K."/>
        </authorList>
    </citation>
    <scope>FUNCTION</scope>
    <scope>DISRUPTION PHENOTYPE</scope>
</reference>
<reference key="6">
    <citation type="journal article" date="2011" name="Nat. Struct. Mol. Biol.">
        <title>Structural basis for MOF and MSL3 recruitment into the dosage compensation complex by MSL1.</title>
        <authorList>
            <person name="Kadlec J."/>
            <person name="Hallacli E."/>
            <person name="Lipp M."/>
            <person name="Holz H."/>
            <person name="Sanchez-Weatherby J."/>
            <person name="Cusack S."/>
            <person name="Akhtar A."/>
        </authorList>
    </citation>
    <scope>INTERACTION WITH MSL1</scope>
</reference>
<reference key="7">
    <citation type="journal article" date="2013" name="Dev. Cell">
        <title>Mammalian X upregulation is associated with enhanced transcription initiation, RNA half-life, and MOF-mediated H4K16 acetylation.</title>
        <authorList>
            <person name="Deng X."/>
            <person name="Berletch J.B."/>
            <person name="Ma W."/>
            <person name="Nguyen D.K."/>
            <person name="Hiatt J.B."/>
            <person name="Noble W.S."/>
            <person name="Shendure J."/>
            <person name="Disteche C.M."/>
        </authorList>
    </citation>
    <scope>FUNCTION</scope>
    <scope>SUBCELLULAR LOCATION</scope>
</reference>
<reference key="8">
    <citation type="journal article" date="2014" name="Elife">
        <title>MOF-associated complexes ensure stem cell identity and Xist repression.</title>
        <authorList>
            <person name="Chelmicki T."/>
            <person name="Duendar F."/>
            <person name="Turley M.J."/>
            <person name="Khanam T."/>
            <person name="Aktas T."/>
            <person name="Ramirez F."/>
            <person name="Gendrel A.V."/>
            <person name="Wright P.R."/>
            <person name="Videm P."/>
            <person name="Backofen R."/>
            <person name="Heard E."/>
            <person name="Manke T."/>
            <person name="Akhtar A."/>
        </authorList>
    </citation>
    <scope>FUNCTION</scope>
    <scope>IDENTIFICATION IN THE MSL COMPLEX</scope>
    <scope>IDENTIFICATION IN THE NSL COMPLEX</scope>
    <scope>SUBCELLULAR LOCATION</scope>
</reference>
<reference key="9">
    <citation type="journal article" date="2014" name="Elife">
        <title>Mof-associated complexes have overlapping and unique roles in regulating pluripotency in embryonic stem cells and during differentiation.</title>
        <authorList>
            <person name="Ravens S."/>
            <person name="Fournier M."/>
            <person name="Ye T."/>
            <person name="Stierle M."/>
            <person name="Dembele D."/>
            <person name="Chavant V."/>
            <person name="Tora L."/>
        </authorList>
    </citation>
    <scope>FUNCTION</scope>
    <scope>IDENTIFICATION IN THE MSL COMPLEX</scope>
    <scope>IDENTIFICATION IN THE NSL COMPLEX</scope>
    <scope>SUBCELLULAR LOCATION</scope>
</reference>
<reference key="10">
    <citation type="journal article" date="2016" name="Cell">
        <title>MOF acetyl transferase regulates transcription and respiration in mitochondria.</title>
        <authorList>
            <person name="Chatterjee A."/>
            <person name="Seyfferth J."/>
            <person name="Lucci J."/>
            <person name="Gilsbach R."/>
            <person name="Preissl S."/>
            <person name="Boettinger L."/>
            <person name="Maartensson C.U."/>
            <person name="Panhale A."/>
            <person name="Stehle T."/>
            <person name="Kretz O."/>
            <person name="Sahyoun A.H."/>
            <person name="Avilov S."/>
            <person name="Eimer S."/>
            <person name="Hein L."/>
            <person name="Pfanner N."/>
            <person name="Becker T."/>
            <person name="Akhtar A."/>
        </authorList>
    </citation>
    <scope>FUNCTION</scope>
    <scope>SUBCELLULAR LOCATION</scope>
    <scope>IDENTIFICATION IN THE NSL COMPLEX</scope>
    <scope>DISRUPTION PHENOTYPE</scope>
</reference>
<reference key="11">
    <citation type="journal article" date="2017" name="Blood">
        <title>Histone acetyltransferase activity of MOF is required for adult but not early fetal hematopoiesis in mice.</title>
        <authorList>
            <person name="Valerio D.G."/>
            <person name="Xu H."/>
            <person name="Eisold M.E."/>
            <person name="Woolthuis C.M."/>
            <person name="Pandita T.K."/>
            <person name="Armstrong S.A."/>
        </authorList>
    </citation>
    <scope>FUNCTION</scope>
    <scope>DISRUPTION PHENOTYPE</scope>
</reference>
<reference key="12">
    <citation type="journal article" date="2017" name="Development">
        <title>Histone acetyltransferase KAT8 is essential for mouse oocyte development by regulating reactive oxygen species levels.</title>
        <authorList>
            <person name="Yin S."/>
            <person name="Jiang X."/>
            <person name="Jiang H."/>
            <person name="Gao Q."/>
            <person name="Wang F."/>
            <person name="Fan S."/>
            <person name="Khan T."/>
            <person name="Jabeen N."/>
            <person name="Khan M."/>
            <person name="Ali A."/>
            <person name="Xu P."/>
            <person name="Pandita T.K."/>
            <person name="Fan H.Y."/>
            <person name="Zhang Y."/>
            <person name="Shi Q."/>
        </authorList>
    </citation>
    <scope>FUNCTION</scope>
    <scope>SUBCELLULAR LOCATION</scope>
    <scope>TISSUE SPECIFICITY</scope>
    <scope>DISRUPTION PHENOTYPE</scope>
</reference>
<reference key="13">
    <citation type="journal article" date="2019" name="J. Exp. Med.">
        <title>KAT8 selectively inhibits antiviral immunity by acetylating IRF3.</title>
        <authorList>
            <person name="Huai W."/>
            <person name="Liu X."/>
            <person name="Wang C."/>
            <person name="Zhang Y."/>
            <person name="Chen X."/>
            <person name="Chen X."/>
            <person name="Xu S."/>
            <person name="Thomas T."/>
            <person name="Li N."/>
            <person name="Cao X."/>
        </authorList>
    </citation>
    <scope>FUNCTION</scope>
    <scope>CATALYTIC ACTIVITY</scope>
    <scope>ACETYLATION AT LYS-274</scope>
    <scope>MUTAGENESIS OF LYS-274</scope>
</reference>
<reference key="14">
    <citation type="journal article" date="2019" name="Nat. Cell Biol.">
        <title>The NSL complex maintains nuclear architecture stability via lamin A/C acetylation.</title>
        <authorList>
            <person name="Karoutas A."/>
            <person name="Szymanski W."/>
            <person name="Rausch T."/>
            <person name="Guhathakurta S."/>
            <person name="Rog-Zielinska E.A."/>
            <person name="Peyronnet R."/>
            <person name="Seyfferth J."/>
            <person name="Chen H.R."/>
            <person name="de Leeuw R."/>
            <person name="Herquel B."/>
            <person name="Kimura H."/>
            <person name="Mittler G."/>
            <person name="Kohl P."/>
            <person name="Medalia O."/>
            <person name="Korbel J.O."/>
            <person name="Akhtar A."/>
        </authorList>
    </citation>
    <scope>FUNCTION</scope>
    <scope>CATALYTIC ACTIVITY</scope>
    <scope>IDENTIFICATION IN THE NSL COMPLEX</scope>
    <scope>ACTIVE SITE</scope>
    <scope>MUTAGENESIS OF GLU-350</scope>
</reference>
<reference key="15">
    <citation type="journal article" date="2020" name="Cell">
        <title>Intergenerationally maintained histone H4 lysine 16 acetylation is instructive for future gene activation.</title>
        <authorList>
            <person name="Samata M."/>
            <person name="Alexiadis A."/>
            <person name="Richard G."/>
            <person name="Georgiev P."/>
            <person name="Nuebler J."/>
            <person name="Kulkarni T."/>
            <person name="Renschler G."/>
            <person name="Basilicata M.F."/>
            <person name="Zenk F.L."/>
            <person name="Shvedunova M."/>
            <person name="Semplicio G."/>
            <person name="Mirny L."/>
            <person name="Iovino N."/>
            <person name="Akhtar A."/>
        </authorList>
    </citation>
    <scope>FUNCTION</scope>
</reference>
<reference key="16">
    <citation type="journal article" date="2020" name="J. Clin. Invest.">
        <title>Lysine acetyltransferase 8 is involved in cerebral development and syndromic intellectual disability.</title>
        <authorList>
            <person name="Li L."/>
            <person name="Ghorbani M."/>
            <person name="Weisz-Hubshman M."/>
            <person name="Rousseau J."/>
            <person name="Thiffault I."/>
            <person name="Schnur R.E."/>
            <person name="Breen C."/>
            <person name="Oegema R."/>
            <person name="Weiss M.M."/>
            <person name="Waisfisz Q."/>
            <person name="Welner S."/>
            <person name="Kingston H."/>
            <person name="Hills J.A."/>
            <person name="Boon E.M."/>
            <person name="Basel-Salmon L."/>
            <person name="Konen O."/>
            <person name="Goldberg-Stern H."/>
            <person name="Bazak L."/>
            <person name="Tzur S."/>
            <person name="Jin J."/>
            <person name="Bi X."/>
            <person name="Bruccoleri M."/>
            <person name="McWalter K."/>
            <person name="Cho M.T."/>
            <person name="Scarano M."/>
            <person name="Schaefer G.B."/>
            <person name="Brooks S.S."/>
            <person name="Hughes S.S."/>
            <person name="van Gassen K.L.I."/>
            <person name="van Hagen J.M."/>
            <person name="Pandita T.K."/>
            <person name="Agrawal P.B."/>
            <person name="Campeau P.M."/>
            <person name="Yang X.J."/>
        </authorList>
    </citation>
    <scope>FUNCTION</scope>
    <scope>CATALYTIC ACTIVITY</scope>
    <scope>SUBCELLULAR LOCATION</scope>
    <scope>DISRUPTION PHENOTYPE</scope>
</reference>
<reference key="17">
    <citation type="journal article" date="2021" name="Nat. Commun.">
        <title>Acetylation of PAX7 controls muscle stem cell self-renewal and differentiation potential in mice.</title>
        <authorList>
            <person name="Sincennes M.C."/>
            <person name="Brun C.E."/>
            <person name="Lin A.Y.T."/>
            <person name="Rosembert T."/>
            <person name="Datzkiw D."/>
            <person name="Saber J."/>
            <person name="Ming H."/>
            <person name="Kawabe Y.I."/>
            <person name="Rudnicki M.A."/>
        </authorList>
    </citation>
    <scope>FUNCTION</scope>
    <scope>CATALYTIC ACTIVITY</scope>
</reference>
<reference key="18">
    <citation type="journal article" date="2021" name="Nat. Commun.">
        <title>Histone H4 lysine 16 acetylation controls central carbon metabolism and diet-induced obesity in mice.</title>
        <authorList>
            <person name="Pessoa Rodrigues C."/>
            <person name="Chatterjee A."/>
            <person name="Wiese M."/>
            <person name="Stehle T."/>
            <person name="Szymanski W."/>
            <person name="Shvedunova M."/>
            <person name="Akhtar A."/>
        </authorList>
    </citation>
    <scope>FUNCTION</scope>
</reference>
<reference key="19">
    <citation type="journal article" date="2023" name="Nat. Metab.">
        <title>COX17 acetylation via MOF-KANSL complex promotes mitochondrial integrity and function.</title>
        <authorList>
            <person name="Guhathakurta S."/>
            <person name="Erdogdu N.U."/>
            <person name="Hoffmann J.J."/>
            <person name="Grzadzielewska I."/>
            <person name="Schendzielorz A."/>
            <person name="Seyfferth J."/>
            <person name="Maartensson C.U."/>
            <person name="Corrado M."/>
            <person name="Karoutas A."/>
            <person name="Warscheid B."/>
            <person name="Pfanner N."/>
            <person name="Becker T."/>
            <person name="Akhtar A."/>
        </authorList>
    </citation>
    <scope>FUNCTION</scope>
    <scope>CATALYTIC ACTIVITY</scope>
    <scope>SUBCELLULAR LOCATION</scope>
    <scope>IDENTIFICATION IN THE NSL COMPLEX</scope>
</reference>
<reference key="20">
    <citation type="submission" date="2004-05" db="PDB data bank">
        <title>Solution structure of the Tudor domain from mouse hypothetical protein homologous to histone acetyltransferase.</title>
        <authorList>
            <consortium name="RIKEN structural genomics initiative (RSGI)"/>
        </authorList>
    </citation>
    <scope>STRUCTURE BY NMR OF 50-169 (ISOFORM 1)</scope>
</reference>
<gene>
    <name evidence="26 31" type="primary">Kat8</name>
    <name evidence="25" type="synonym">Mof</name>
    <name evidence="24" type="synonym">Myst1</name>
</gene>
<dbReference type="EC" id="2.3.1.48" evidence="18"/>
<dbReference type="EC" id="2.3.1.-" evidence="16 17 20 2"/>
<dbReference type="EMBL" id="AK003264">
    <property type="protein sequence ID" value="BAB22680.1"/>
    <property type="molecule type" value="mRNA"/>
</dbReference>
<dbReference type="EMBL" id="AK018002">
    <property type="protein sequence ID" value="BAC25539.1"/>
    <property type="status" value="ALT_FRAME"/>
    <property type="molecule type" value="mRNA"/>
</dbReference>
<dbReference type="EMBL" id="AK029350">
    <property type="protein sequence ID" value="BAC26411.1"/>
    <property type="molecule type" value="mRNA"/>
</dbReference>
<dbReference type="EMBL" id="AK146710">
    <property type="protein sequence ID" value="BAE27376.1"/>
    <property type="molecule type" value="mRNA"/>
</dbReference>
<dbReference type="EMBL" id="BC036284">
    <property type="protein sequence ID" value="AAH36284.1"/>
    <property type="molecule type" value="mRNA"/>
</dbReference>
<dbReference type="CCDS" id="CCDS21885.1">
    <molecule id="Q9D1P2-1"/>
</dbReference>
<dbReference type="RefSeq" id="NP_080646.1">
    <molecule id="Q9D1P2-1"/>
    <property type="nucleotide sequence ID" value="NM_026370.2"/>
</dbReference>
<dbReference type="PDB" id="1WGS">
    <property type="method" value="NMR"/>
    <property type="chains" value="A=50-169"/>
</dbReference>
<dbReference type="PDBsum" id="1WGS"/>
<dbReference type="BMRB" id="Q9D1P2"/>
<dbReference type="SMR" id="Q9D1P2"/>
<dbReference type="BioGRID" id="212433">
    <property type="interactions" value="35"/>
</dbReference>
<dbReference type="ComplexPortal" id="CPX-859">
    <property type="entry name" value="MSL histone acetyltransferase complex"/>
</dbReference>
<dbReference type="ComplexPortal" id="CPX-875">
    <property type="entry name" value="NSL histone acetyltransferase complex"/>
</dbReference>
<dbReference type="FunCoup" id="Q9D1P2">
    <property type="interactions" value="2625"/>
</dbReference>
<dbReference type="IntAct" id="Q9D1P2">
    <property type="interactions" value="32"/>
</dbReference>
<dbReference type="MINT" id="Q9D1P2"/>
<dbReference type="STRING" id="10090.ENSMUSP00000033070"/>
<dbReference type="GlyGen" id="Q9D1P2">
    <property type="glycosylation" value="1 site"/>
</dbReference>
<dbReference type="iPTMnet" id="Q9D1P2"/>
<dbReference type="PhosphoSitePlus" id="Q9D1P2"/>
<dbReference type="jPOST" id="Q9D1P2"/>
<dbReference type="PaxDb" id="10090-ENSMUSP00000033070"/>
<dbReference type="PeptideAtlas" id="Q9D1P2"/>
<dbReference type="ProteomicsDB" id="269179">
    <molecule id="Q9D1P2-1"/>
</dbReference>
<dbReference type="ProteomicsDB" id="269180">
    <molecule id="Q9D1P2-2"/>
</dbReference>
<dbReference type="Pumba" id="Q9D1P2"/>
<dbReference type="Antibodypedia" id="27640">
    <property type="antibodies" value="294 antibodies from 38 providers"/>
</dbReference>
<dbReference type="DNASU" id="67773"/>
<dbReference type="Ensembl" id="ENSMUST00000033070.9">
    <molecule id="Q9D1P2-1"/>
    <property type="protein sequence ID" value="ENSMUSP00000033070.8"/>
    <property type="gene ID" value="ENSMUSG00000030801.11"/>
</dbReference>
<dbReference type="GeneID" id="67773"/>
<dbReference type="KEGG" id="mmu:67773"/>
<dbReference type="UCSC" id="uc009jxg.1">
    <molecule id="Q9D1P2-2"/>
    <property type="organism name" value="mouse"/>
</dbReference>
<dbReference type="UCSC" id="uc009jxh.1">
    <molecule id="Q9D1P2-1"/>
    <property type="organism name" value="mouse"/>
</dbReference>
<dbReference type="AGR" id="MGI:1915023"/>
<dbReference type="CTD" id="84148"/>
<dbReference type="MGI" id="MGI:1915023">
    <property type="gene designation" value="Kat8"/>
</dbReference>
<dbReference type="VEuPathDB" id="HostDB:ENSMUSG00000030801"/>
<dbReference type="eggNOG" id="KOG2747">
    <property type="taxonomic scope" value="Eukaryota"/>
</dbReference>
<dbReference type="GeneTree" id="ENSGT00940000159512"/>
<dbReference type="HOGENOM" id="CLU_011815_2_1_1"/>
<dbReference type="InParanoid" id="Q9D1P2"/>
<dbReference type="OMA" id="DSPEGNN"/>
<dbReference type="OrthoDB" id="787137at2759"/>
<dbReference type="PhylomeDB" id="Q9D1P2"/>
<dbReference type="TreeFam" id="TF317619"/>
<dbReference type="BRENDA" id="2.3.1.48">
    <property type="organism ID" value="3474"/>
</dbReference>
<dbReference type="Reactome" id="R-MMU-3214847">
    <property type="pathway name" value="HATs acetylate histones"/>
</dbReference>
<dbReference type="Reactome" id="R-MMU-9772755">
    <property type="pathway name" value="Formation of WDR5-containing histone-modifying complexes"/>
</dbReference>
<dbReference type="BioGRID-ORCS" id="67773">
    <property type="hits" value="27 hits in 77 CRISPR screens"/>
</dbReference>
<dbReference type="ChiTaRS" id="Kat8">
    <property type="organism name" value="mouse"/>
</dbReference>
<dbReference type="EvolutionaryTrace" id="Q9D1P2"/>
<dbReference type="PRO" id="PR:Q9D1P2"/>
<dbReference type="Proteomes" id="UP000000589">
    <property type="component" value="Chromosome 7"/>
</dbReference>
<dbReference type="RNAct" id="Q9D1P2">
    <property type="molecule type" value="protein"/>
</dbReference>
<dbReference type="Bgee" id="ENSMUSG00000030801">
    <property type="expression patterns" value="Expressed in seminiferous tubule of testis and 230 other cell types or tissues"/>
</dbReference>
<dbReference type="ExpressionAtlas" id="Q9D1P2">
    <property type="expression patterns" value="baseline and differential"/>
</dbReference>
<dbReference type="GO" id="GO:0005694">
    <property type="term" value="C:chromosome"/>
    <property type="evidence" value="ECO:0000314"/>
    <property type="project" value="UniProtKB"/>
</dbReference>
<dbReference type="GO" id="GO:0000123">
    <property type="term" value="C:histone acetyltransferase complex"/>
    <property type="evidence" value="ECO:0000250"/>
    <property type="project" value="UniProtKB"/>
</dbReference>
<dbReference type="GO" id="GO:0000776">
    <property type="term" value="C:kinetochore"/>
    <property type="evidence" value="ECO:0000314"/>
    <property type="project" value="MGI"/>
</dbReference>
<dbReference type="GO" id="GO:0005739">
    <property type="term" value="C:mitochondrion"/>
    <property type="evidence" value="ECO:0000314"/>
    <property type="project" value="UniProtKB"/>
</dbReference>
<dbReference type="GO" id="GO:0071339">
    <property type="term" value="C:MLL1 complex"/>
    <property type="evidence" value="ECO:0007669"/>
    <property type="project" value="Ensembl"/>
</dbReference>
<dbReference type="GO" id="GO:0072487">
    <property type="term" value="C:MSL complex"/>
    <property type="evidence" value="ECO:0000314"/>
    <property type="project" value="UniProtKB"/>
</dbReference>
<dbReference type="GO" id="GO:0044545">
    <property type="term" value="C:NSL complex"/>
    <property type="evidence" value="ECO:0000314"/>
    <property type="project" value="UniProtKB"/>
</dbReference>
<dbReference type="GO" id="GO:0016363">
    <property type="term" value="C:nuclear matrix"/>
    <property type="evidence" value="ECO:0000314"/>
    <property type="project" value="MGI"/>
</dbReference>
<dbReference type="GO" id="GO:0005634">
    <property type="term" value="C:nucleus"/>
    <property type="evidence" value="ECO:0000314"/>
    <property type="project" value="UniProtKB"/>
</dbReference>
<dbReference type="GO" id="GO:0016407">
    <property type="term" value="F:acetyltransferase activity"/>
    <property type="evidence" value="ECO:0000314"/>
    <property type="project" value="UniProtKB"/>
</dbReference>
<dbReference type="GO" id="GO:0019899">
    <property type="term" value="F:enzyme binding"/>
    <property type="evidence" value="ECO:0000353"/>
    <property type="project" value="UniProtKB"/>
</dbReference>
<dbReference type="GO" id="GO:0046972">
    <property type="term" value="F:histone H4K16 acetyltransferase activity"/>
    <property type="evidence" value="ECO:0000314"/>
    <property type="project" value="UniProtKB"/>
</dbReference>
<dbReference type="GO" id="GO:0043995">
    <property type="term" value="F:histone H4K5 acetyltransferase activity"/>
    <property type="evidence" value="ECO:0000250"/>
    <property type="project" value="UniProtKB"/>
</dbReference>
<dbReference type="GO" id="GO:0043996">
    <property type="term" value="F:histone H4K8 acetyltransferase activity"/>
    <property type="evidence" value="ECO:0000250"/>
    <property type="project" value="UniProtKB"/>
</dbReference>
<dbReference type="GO" id="GO:1990841">
    <property type="term" value="F:promoter-specific chromatin binding"/>
    <property type="evidence" value="ECO:0000314"/>
    <property type="project" value="UniProtKB"/>
</dbReference>
<dbReference type="GO" id="GO:0061920">
    <property type="term" value="F:protein propionyltransferase activity"/>
    <property type="evidence" value="ECO:0000250"/>
    <property type="project" value="UniProtKB"/>
</dbReference>
<dbReference type="GO" id="GO:0061733">
    <property type="term" value="F:protein-lysine-acetyltransferase activity"/>
    <property type="evidence" value="ECO:0000314"/>
    <property type="project" value="UniProtKB"/>
</dbReference>
<dbReference type="GO" id="GO:0061629">
    <property type="term" value="F:RNA polymerase II-specific DNA-binding transcription factor binding"/>
    <property type="evidence" value="ECO:0007669"/>
    <property type="project" value="Ensembl"/>
</dbReference>
<dbReference type="GO" id="GO:0003713">
    <property type="term" value="F:transcription coactivator activity"/>
    <property type="evidence" value="ECO:0007669"/>
    <property type="project" value="Ensembl"/>
</dbReference>
<dbReference type="GO" id="GO:0008270">
    <property type="term" value="F:zinc ion binding"/>
    <property type="evidence" value="ECO:0007669"/>
    <property type="project" value="UniProtKB-KW"/>
</dbReference>
<dbReference type="GO" id="GO:0009048">
    <property type="term" value="P:dosage compensation by inactivation of X chromosome"/>
    <property type="evidence" value="ECO:0000314"/>
    <property type="project" value="UniProtKB"/>
</dbReference>
<dbReference type="GO" id="GO:0030099">
    <property type="term" value="P:myeloid cell differentiation"/>
    <property type="evidence" value="ECO:0007669"/>
    <property type="project" value="Ensembl"/>
</dbReference>
<dbReference type="GO" id="GO:0045892">
    <property type="term" value="P:negative regulation of DNA-templated transcription"/>
    <property type="evidence" value="ECO:0007669"/>
    <property type="project" value="Ensembl"/>
</dbReference>
<dbReference type="GO" id="GO:0010719">
    <property type="term" value="P:negative regulation of epithelial to mesenchymal transition"/>
    <property type="evidence" value="ECO:0000250"/>
    <property type="project" value="UniProtKB"/>
</dbReference>
<dbReference type="GO" id="GO:0032480">
    <property type="term" value="P:negative regulation of type I interferon production"/>
    <property type="evidence" value="ECO:0000314"/>
    <property type="project" value="UniProtKB"/>
</dbReference>
<dbReference type="GO" id="GO:0022008">
    <property type="term" value="P:neurogenesis"/>
    <property type="evidence" value="ECO:0000315"/>
    <property type="project" value="UniProtKB"/>
</dbReference>
<dbReference type="GO" id="GO:0048477">
    <property type="term" value="P:oogenesis"/>
    <property type="evidence" value="ECO:0000314"/>
    <property type="project" value="UniProtKB"/>
</dbReference>
<dbReference type="GO" id="GO:0045893">
    <property type="term" value="P:positive regulation of DNA-templated transcription"/>
    <property type="evidence" value="ECO:0000315"/>
    <property type="project" value="ComplexPortal"/>
</dbReference>
<dbReference type="GO" id="GO:1902726">
    <property type="term" value="P:positive regulation of skeletal muscle satellite cell differentiation"/>
    <property type="evidence" value="ECO:0000314"/>
    <property type="project" value="UniProtKB"/>
</dbReference>
<dbReference type="GO" id="GO:0060261">
    <property type="term" value="P:positive regulation of transcription initiation by RNA polymerase II"/>
    <property type="evidence" value="ECO:0000250"/>
    <property type="project" value="UniProtKB"/>
</dbReference>
<dbReference type="GO" id="GO:0035166">
    <property type="term" value="P:post-embryonic hemopoiesis"/>
    <property type="evidence" value="ECO:0000315"/>
    <property type="project" value="UniProtKB"/>
</dbReference>
<dbReference type="GO" id="GO:0010506">
    <property type="term" value="P:regulation of autophagy"/>
    <property type="evidence" value="ECO:0000266"/>
    <property type="project" value="MGI"/>
</dbReference>
<dbReference type="GO" id="GO:1903108">
    <property type="term" value="P:regulation of mitochondrial transcription"/>
    <property type="evidence" value="ECO:0000314"/>
    <property type="project" value="UniProtKB"/>
</dbReference>
<dbReference type="GO" id="GO:0050684">
    <property type="term" value="P:regulation of mRNA processing"/>
    <property type="evidence" value="ECO:0007669"/>
    <property type="project" value="Ensembl"/>
</dbReference>
<dbReference type="GO" id="GO:0045815">
    <property type="term" value="P:transcription initiation-coupled chromatin remodeling"/>
    <property type="evidence" value="ECO:0007669"/>
    <property type="project" value="Ensembl"/>
</dbReference>
<dbReference type="CDD" id="cd18984">
    <property type="entry name" value="CBD_MOF_like"/>
    <property type="match status" value="1"/>
</dbReference>
<dbReference type="CDD" id="cd04301">
    <property type="entry name" value="NAT_SF"/>
    <property type="match status" value="1"/>
</dbReference>
<dbReference type="FunFam" id="1.10.10.10:FF:000022">
    <property type="entry name" value="Histone acetyltransferase"/>
    <property type="match status" value="1"/>
</dbReference>
<dbReference type="FunFam" id="2.30.30.140:FF:000039">
    <property type="entry name" value="Histone acetyltransferase"/>
    <property type="match status" value="1"/>
</dbReference>
<dbReference type="FunFam" id="3.30.60.60:FF:000001">
    <property type="entry name" value="Histone acetyltransferase"/>
    <property type="match status" value="1"/>
</dbReference>
<dbReference type="FunFam" id="3.40.630.30:FF:000002">
    <property type="entry name" value="Histone acetyltransferase"/>
    <property type="match status" value="1"/>
</dbReference>
<dbReference type="Gene3D" id="2.30.30.140">
    <property type="match status" value="1"/>
</dbReference>
<dbReference type="Gene3D" id="3.40.630.30">
    <property type="match status" value="1"/>
</dbReference>
<dbReference type="Gene3D" id="3.30.60.60">
    <property type="entry name" value="N-acetyl transferase-like"/>
    <property type="match status" value="1"/>
</dbReference>
<dbReference type="Gene3D" id="1.10.10.10">
    <property type="entry name" value="Winged helix-like DNA-binding domain superfamily/Winged helix DNA-binding domain"/>
    <property type="match status" value="1"/>
</dbReference>
<dbReference type="InterPro" id="IPR016181">
    <property type="entry name" value="Acyl_CoA_acyltransferase"/>
</dbReference>
<dbReference type="InterPro" id="IPR016197">
    <property type="entry name" value="Chromo-like_dom_sf"/>
</dbReference>
<dbReference type="InterPro" id="IPR000953">
    <property type="entry name" value="Chromo/chromo_shadow_dom"/>
</dbReference>
<dbReference type="InterPro" id="IPR002717">
    <property type="entry name" value="HAT_MYST-type"/>
</dbReference>
<dbReference type="InterPro" id="IPR050603">
    <property type="entry name" value="MYST_HAT"/>
</dbReference>
<dbReference type="InterPro" id="IPR025995">
    <property type="entry name" value="Tudor-knot"/>
</dbReference>
<dbReference type="InterPro" id="IPR036388">
    <property type="entry name" value="WH-like_DNA-bd_sf"/>
</dbReference>
<dbReference type="InterPro" id="IPR040706">
    <property type="entry name" value="Zf-MYST"/>
</dbReference>
<dbReference type="PANTHER" id="PTHR10615">
    <property type="entry name" value="HISTONE ACETYLTRANSFERASE"/>
    <property type="match status" value="1"/>
</dbReference>
<dbReference type="PANTHER" id="PTHR10615:SF82">
    <property type="entry name" value="HISTONE ACETYLTRANSFERASE KAT8"/>
    <property type="match status" value="1"/>
</dbReference>
<dbReference type="Pfam" id="PF01853">
    <property type="entry name" value="MOZ_SAS"/>
    <property type="match status" value="1"/>
</dbReference>
<dbReference type="Pfam" id="PF11717">
    <property type="entry name" value="Tudor-knot"/>
    <property type="match status" value="1"/>
</dbReference>
<dbReference type="Pfam" id="PF17772">
    <property type="entry name" value="zf-MYST"/>
    <property type="match status" value="1"/>
</dbReference>
<dbReference type="SMART" id="SM00298">
    <property type="entry name" value="CHROMO"/>
    <property type="match status" value="1"/>
</dbReference>
<dbReference type="SUPFAM" id="SSF55729">
    <property type="entry name" value="Acyl-CoA N-acyltransferases (Nat)"/>
    <property type="match status" value="1"/>
</dbReference>
<dbReference type="SUPFAM" id="SSF54160">
    <property type="entry name" value="Chromo domain-like"/>
    <property type="match status" value="1"/>
</dbReference>
<dbReference type="PROSITE" id="PS51726">
    <property type="entry name" value="MYST_HAT"/>
    <property type="match status" value="1"/>
</dbReference>
<comment type="function">
    <text evidence="2 7 8 10 11 12 13 14 15 16 17 18 19 20 21 22">Histone acetyltransferase that catalyzes histone H4 acetylation at 'Lys-5'- and 'Lys-8' (H4K5ac and H4K8ac) or 'Lys-16' (H4K16ac), depending on the context (PubMed:24842875, PubMed:24898753, PubMed:31794431, PubMed:32502394). Catalytic component of the MSL histone acetyltransferase complex, a multiprotein complex that mediates the majority of histone H4 acetylation at 'Lys-16' (H4K16ac), an epigenetic mark that prevents chromatin compaction (PubMed:17967868, PubMed:18541669, PubMed:24898753, PubMed:28506985). H4K16ac constitutes the only acetylation mark intergenerationally transmitted and regulates key biological processes, such as oogenesis, embryonic stem cell pluripotency, hematopoiesis or glucose metabolism (PubMed:27827827, PubMed:28506985, PubMed:32502394, PubMed:34707105). The MSL complex is required for chromosome stability and genome integrity by maintaining homeostatic levels of H4K16ac (By similarity). The MSL complex is also involved in gene dosage by promoting up-regulation of genes expressed by the X chromosome (PubMed:23523075). X up-regulation is required to compensate for autosomal biallelic expression (PubMed:23523075). The MSL complex also participates in gene dosage compensation by promoting expression of Tsix non-coding RNA (PubMed:24842875). As part of the NSL histone acetyltransferase complex, catalyzes histone H4 acetylation at 'Lys-5'- and 'Lys-8' (H4K5ac and H4K8ac) at transcription start sites and promotes transcription initiation (By similarity). The NSL complex also acts as a regulator of gene expression in mitochondria: KAT8 associates with mitochondrial DNA and controls expression of respiratory genes in an acetyltransferase-dependent mechanism (PubMed:27768893). Also functions as an acetyltransferase for non-histone targets, such as ALKBH5, COX17, IRF3, KDM1A/LSD1, LMNA, PAX7 or TP53/p53 (PubMed:30842237, PubMed:31576060, PubMed:34059674). Acts as an inhibitor of antiviral immunity by acetylating IRF3, preventing IRF3 recruitment to promoters (PubMed:30842237). Acts as a regulator of asymmetric division in muscle stem cells by mediating acetylation of PAX7 (PubMed:34059674). As part of the NSL complex, acetylates TP53/p53 at 'Lys-120' (By similarity). Acts as a regulator of epithelial-to-mesenchymal transition as part of the NSL complex by mediating acetylation of KDM1A/LSD1 (By similarity). The NSL complex is required for nuclear architecture maintenance by mediating acetylation of LMNA (PubMed:31576060). Promotes mitochondrial integrity by catalyzing acetylation of COX17 (PubMed:37813994). In addition to protein acetyltransferase activity, able to mediate protein propionylation (By similarity).</text>
</comment>
<comment type="catalytic activity">
    <reaction evidence="12 18">
        <text>L-lysyl-[histone] + acetyl-CoA = N(6)-acetyl-L-lysyl-[histone] + CoA + H(+)</text>
        <dbReference type="Rhea" id="RHEA:21992"/>
        <dbReference type="Rhea" id="RHEA-COMP:9845"/>
        <dbReference type="Rhea" id="RHEA-COMP:11338"/>
        <dbReference type="ChEBI" id="CHEBI:15378"/>
        <dbReference type="ChEBI" id="CHEBI:29969"/>
        <dbReference type="ChEBI" id="CHEBI:57287"/>
        <dbReference type="ChEBI" id="CHEBI:57288"/>
        <dbReference type="ChEBI" id="CHEBI:61930"/>
        <dbReference type="EC" id="2.3.1.48"/>
    </reaction>
    <physiologicalReaction direction="left-to-right" evidence="12 18">
        <dbReference type="Rhea" id="RHEA:21993"/>
    </physiologicalReaction>
</comment>
<comment type="catalytic activity">
    <reaction evidence="16 17 20">
        <text>L-lysyl-[protein] + acetyl-CoA = N(6)-acetyl-L-lysyl-[protein] + CoA + H(+)</text>
        <dbReference type="Rhea" id="RHEA:45948"/>
        <dbReference type="Rhea" id="RHEA-COMP:9752"/>
        <dbReference type="Rhea" id="RHEA-COMP:10731"/>
        <dbReference type="ChEBI" id="CHEBI:15378"/>
        <dbReference type="ChEBI" id="CHEBI:29969"/>
        <dbReference type="ChEBI" id="CHEBI:57287"/>
        <dbReference type="ChEBI" id="CHEBI:57288"/>
        <dbReference type="ChEBI" id="CHEBI:61930"/>
    </reaction>
    <physiologicalReaction direction="left-to-right" evidence="16 17 20">
        <dbReference type="Rhea" id="RHEA:45949"/>
    </physiologicalReaction>
</comment>
<comment type="catalytic activity">
    <reaction evidence="2">
        <text>propanoyl-CoA + L-lysyl-[protein] = N(6)-propanoyl-L-lysyl-[protein] + CoA + H(+)</text>
        <dbReference type="Rhea" id="RHEA:54020"/>
        <dbReference type="Rhea" id="RHEA-COMP:9752"/>
        <dbReference type="Rhea" id="RHEA-COMP:13758"/>
        <dbReference type="ChEBI" id="CHEBI:15378"/>
        <dbReference type="ChEBI" id="CHEBI:29969"/>
        <dbReference type="ChEBI" id="CHEBI:57287"/>
        <dbReference type="ChEBI" id="CHEBI:57392"/>
        <dbReference type="ChEBI" id="CHEBI:138019"/>
    </reaction>
    <physiologicalReaction direction="left-to-right" evidence="2">
        <dbReference type="Rhea" id="RHEA:54021"/>
    </physiologicalReaction>
</comment>
<comment type="activity regulation">
    <text evidence="2">The acetyltransferase activity is inhibited by anacardic acid derivatives.</text>
</comment>
<comment type="subunit">
    <text evidence="2 6 9 11 12 13 17 22">Component of a multisubunit histone acetyltransferase complex (MSL) at least composed of the MOF/KAT8, MSL1/hampin, MSL2L1 and MSL3L1 (PubMed:17335777, PubMed:21217699, PubMed:24842875, PubMed:24898753). Component of the NSL complex at least composed of MOF/KAT8, KANSL1, KANSL2, KANSL3, MCRS1, PHF20, OGT1/OGT, WDR5 and HCFC1 (PubMed:24842875, PubMed:24898753, PubMed:27768893, PubMed:31576060, PubMed:37813994). Component of some MLL1/MLL complex, at least composed of the core components KMT2A/MLL1, ASH2L, HCFC1, WDR5 and RBBP5, as well as the facultative components BACC1, CHD8, E2F6, HSP70, INO80C, KANSL1, LAS1L, MAX, MCRS1, MGA, MOF/KAT8, PELP1, PHF20, PRP31, RING2, RUVB1/TIP49A, RUVB2/TIP49B, SENP3, TAF1, TAF4, TAF6, TAF7, TAF9 and TEX10 (By similarity). Interacts with the chromodomain of MORF4L1/MRG15 (By similarity). Interacts with ATM (via its Tudor-knot domain); possibly regulating the activity of ATM (By similarity). Interacts with NELFD (PubMed:17335777).</text>
</comment>
<comment type="subcellular location">
    <subcellularLocation>
        <location evidence="15 30">Nucleus</location>
    </subcellularLocation>
    <subcellularLocation>
        <location evidence="10 11 12 30">Chromosome</location>
    </subcellularLocation>
    <subcellularLocation>
        <location evidence="13 22">Mitochondrion</location>
    </subcellularLocation>
    <text evidence="2 10 11 12 13">Translocated into the nucleus via its association with importin-alpha-1 (KPNA2) (By similarity). As part of the NSL complex, associates with the proximal part of promoters and transcription start sites (PubMed:23523075, PubMed:24842875, PubMed:24898753). As part of the MSL complex, associates with gene bodies (PubMed:24898753). Also localizes to mitochondria; associates with mitochondrial DNA and regulates mitochondrial gene expression (PubMed:27768893).</text>
</comment>
<comment type="alternative products">
    <event type="alternative splicing"/>
    <isoform>
        <id>Q9D1P2-1</id>
        <name>1</name>
        <sequence type="displayed"/>
    </isoform>
    <isoform>
        <id>Q9D1P2-2</id>
        <name>2</name>
        <sequence type="described" ref="VSP_014580 VSP_014581"/>
    </isoform>
</comment>
<comment type="tissue specificity">
    <text evidence="15">During oocyte development, expressed in both oocytes and granulosa cells.</text>
</comment>
<comment type="PTM">
    <text evidence="2">Acetylation at Lys-274 facilitates cognate substrate Lys-binding and acetylation (By similarity). Although considered as an autoacetylation event, acetylation at Lys-274 probably takes place via a non-enzymatic process following acetyl-CoA-binding, which primes KAT8 for cognate protein-lysine acetylation (By similarity).</text>
</comment>
<comment type="disruption phenotype">
    <text evidence="7 8 13 14 15 18">Early embryonic lethality caused by the absence of histone H4 acetylation at 'Lys-16' (H4K16ac) (PubMed:17967868, PubMed:18541669). Embryos fail to develop beyond the expanded blastocyst stage and die at implantation (PubMed:18541669). Conditional deletion cardiac and skeletal muscles is deleterious for tissues with high-energy consumption, triggering hypertrophic cardiomyopathy and cardiac failure in hearts (PubMed:27768893). Cardiomyocytes show severe mitochondrial degeneration and deregulation of mitochondrial nutrient metabolism and oxidative phosphorylation pathways (PubMed:27768893). Conditional deletion in hematopoietic cells leads to lethal hematopoietic failure at an early postnatal stage, suggesting that Kat8 is required for adult but not early fetal hematopoiesis (PubMed:27827827). Deficient embryos start manifesting hematopoietic defects at E17.5 (PubMed:27827827). Conditional deletion in oocytes results in female infertility, with follicle development failure in the secondary and preantral follicle stages (PubMed:28506985). Defects in oocytes are due to down-regulation of antioxidant genes, leading to a substantial increase in reactive oxygen species (PubMed:28506985). Conditional deletion in the cerebrum results in impaired postnatal growth, hyperactive behavior, and early death (PubMed:31794431). Analysis of mutant mice at various stages of embryonic development showed cerebral hypoplasia with defects in neocortical lamination, abnormal neuronal differentiation with decreased neuronal progenitor cells, and aberrant neuronal migration (PubMed:31794431). These defects were associated with impaired cell proliferation, increased apoptosis, defective neurosphere formation in vitro, and decreased H4K16 propionylation and acetylation in the cerebrocortical neuroepithelium (PubMed:31794431).</text>
</comment>
<comment type="similarity">
    <text evidence="28">Belongs to the MYST (SAS/MOZ) family.</text>
</comment>
<comment type="sequence caution" evidence="28">
    <conflict type="frameshift">
        <sequence resource="EMBL-CDS" id="BAC25539"/>
    </conflict>
</comment>
<name>KAT8_MOUSE</name>
<sequence length="458" mass="52574">MAAQGATAAVAATTSGTVGEGEPGPGENAAVEGPARSPGRVSPPTPARGEPEVTVEIGETYLCRRPDSTWHSAEVIQSRVNDQEGREEFYVHYVGFNRRLDEWVDKNRLALTKTVKDAVQKNSEKYLSELAEQPERKITRNQKRKHDEINHVQKTYAEMDPTTAALEKEHEAITKVKYVDKIHIGNYEIDAWYFSPFPEDYGKQPKLWLCEYCLKYMKFEKSYRFHLGQCQWRQPPGKEIYRKSNISVYEVDGKDHKIYCQNLCLLAKLFLDHKTLYFDVEPFVFYILTEVDRQGAHIVGYFSKEKESPDGNNVACILTLPPYQRRGYGKFLIAFSYELSKLESTVGSPEKPLSDLGKLSYRSYWSWVLLEILRDFRGTLSIKDLSQMTSITQNDIISTLQSLNMVKYWKGQHVICVTPKLVEEHLKSAQYKKPPITVDSVCLKWAPPKHKQVKLSKK</sequence>
<protein>
    <recommendedName>
        <fullName evidence="28">Histone acetyltransferase KAT8</fullName>
        <ecNumber evidence="18">2.3.1.48</ecNumber>
    </recommendedName>
    <alternativeName>
        <fullName evidence="27">Lysine acetyltransferase 8</fullName>
    </alternativeName>
    <alternativeName>
        <fullName evidence="24">MOZ, YBF2/SAS3, SAS2 and TIP60 protein 1</fullName>
        <shortName evidence="24">MYST-1</shortName>
    </alternativeName>
    <alternativeName>
        <fullName evidence="25">Males-absent on the first protein homolog</fullName>
        <shortName evidence="25">mMof</shortName>
    </alternativeName>
    <alternativeName>
        <fullName evidence="28">Protein acetyltransferase KAT8</fullName>
        <ecNumber evidence="16 17 20">2.3.1.-</ecNumber>
    </alternativeName>
    <alternativeName>
        <fullName evidence="28">Protein propionyltransferase KAT8</fullName>
        <ecNumber evidence="2">2.3.1.-</ecNumber>
    </alternativeName>
</protein>
<accession>Q9D1P2</accession>
<accession>Q3UIY0</accession>
<accession>Q8BJ69</accession>
<accession>Q8BJ76</accession>
<accession>Q8CI73</accession>
<organism>
    <name type="scientific">Mus musculus</name>
    <name type="common">Mouse</name>
    <dbReference type="NCBI Taxonomy" id="10090"/>
    <lineage>
        <taxon>Eukaryota</taxon>
        <taxon>Metazoa</taxon>
        <taxon>Chordata</taxon>
        <taxon>Craniata</taxon>
        <taxon>Vertebrata</taxon>
        <taxon>Euteleostomi</taxon>
        <taxon>Mammalia</taxon>
        <taxon>Eutheria</taxon>
        <taxon>Euarchontoglires</taxon>
        <taxon>Glires</taxon>
        <taxon>Rodentia</taxon>
        <taxon>Myomorpha</taxon>
        <taxon>Muroidea</taxon>
        <taxon>Muridae</taxon>
        <taxon>Murinae</taxon>
        <taxon>Mus</taxon>
        <taxon>Mus</taxon>
    </lineage>
</organism>
<keyword id="KW-0002">3D-structure</keyword>
<keyword id="KW-0007">Acetylation</keyword>
<keyword id="KW-0010">Activator</keyword>
<keyword id="KW-0012">Acyltransferase</keyword>
<keyword id="KW-0025">Alternative splicing</keyword>
<keyword id="KW-0156">Chromatin regulator</keyword>
<keyword id="KW-0158">Chromosome</keyword>
<keyword id="KW-0479">Metal-binding</keyword>
<keyword id="KW-0496">Mitochondrion</keyword>
<keyword id="KW-0539">Nucleus</keyword>
<keyword id="KW-0597">Phosphoprotein</keyword>
<keyword id="KW-1185">Reference proteome</keyword>
<keyword id="KW-0804">Transcription</keyword>
<keyword id="KW-0805">Transcription regulation</keyword>
<keyword id="KW-0808">Transferase</keyword>
<keyword id="KW-0862">Zinc</keyword>
<keyword id="KW-0863">Zinc-finger</keyword>